<accession>B3CRX9</accession>
<gene>
    <name evidence="1" type="primary">cysS</name>
    <name type="ordered locus">OTT_0778</name>
</gene>
<feature type="chain" id="PRO_1000090855" description="Cysteine--tRNA ligase">
    <location>
        <begin position="1"/>
        <end position="478"/>
    </location>
</feature>
<feature type="short sequence motif" description="'HIGH' region">
    <location>
        <begin position="31"/>
        <end position="41"/>
    </location>
</feature>
<feature type="short sequence motif" description="'KMSKS' region">
    <location>
        <begin position="274"/>
        <end position="278"/>
    </location>
</feature>
<feature type="binding site" evidence="1">
    <location>
        <position position="29"/>
    </location>
    <ligand>
        <name>Zn(2+)</name>
        <dbReference type="ChEBI" id="CHEBI:29105"/>
    </ligand>
</feature>
<feature type="binding site" evidence="1">
    <location>
        <position position="216"/>
    </location>
    <ligand>
        <name>Zn(2+)</name>
        <dbReference type="ChEBI" id="CHEBI:29105"/>
    </ligand>
</feature>
<feature type="binding site" evidence="1">
    <location>
        <position position="241"/>
    </location>
    <ligand>
        <name>Zn(2+)</name>
        <dbReference type="ChEBI" id="CHEBI:29105"/>
    </ligand>
</feature>
<feature type="binding site" evidence="1">
    <location>
        <position position="245"/>
    </location>
    <ligand>
        <name>Zn(2+)</name>
        <dbReference type="ChEBI" id="CHEBI:29105"/>
    </ligand>
</feature>
<feature type="binding site" evidence="1">
    <location>
        <position position="277"/>
    </location>
    <ligand>
        <name>ATP</name>
        <dbReference type="ChEBI" id="CHEBI:30616"/>
    </ligand>
</feature>
<proteinExistence type="inferred from homology"/>
<name>SYC_ORITI</name>
<protein>
    <recommendedName>
        <fullName evidence="1">Cysteine--tRNA ligase</fullName>
        <ecNumber evidence="1">6.1.1.16</ecNumber>
    </recommendedName>
    <alternativeName>
        <fullName evidence="1">Cysteinyl-tRNA synthetase</fullName>
        <shortName evidence="1">CysRS</shortName>
    </alternativeName>
</protein>
<dbReference type="EC" id="6.1.1.16" evidence="1"/>
<dbReference type="EMBL" id="AP008981">
    <property type="protein sequence ID" value="BAG40236.1"/>
    <property type="molecule type" value="Genomic_DNA"/>
</dbReference>
<dbReference type="RefSeq" id="WP_012461389.1">
    <property type="nucleotide sequence ID" value="NC_010793.1"/>
</dbReference>
<dbReference type="SMR" id="B3CRX9"/>
<dbReference type="KEGG" id="ott:OTT_0778"/>
<dbReference type="HOGENOM" id="CLU_013528_0_1_5"/>
<dbReference type="OrthoDB" id="9815130at2"/>
<dbReference type="Proteomes" id="UP000001033">
    <property type="component" value="Chromosome"/>
</dbReference>
<dbReference type="GO" id="GO:0005829">
    <property type="term" value="C:cytosol"/>
    <property type="evidence" value="ECO:0007669"/>
    <property type="project" value="TreeGrafter"/>
</dbReference>
<dbReference type="GO" id="GO:0005524">
    <property type="term" value="F:ATP binding"/>
    <property type="evidence" value="ECO:0007669"/>
    <property type="project" value="UniProtKB-UniRule"/>
</dbReference>
<dbReference type="GO" id="GO:0004817">
    <property type="term" value="F:cysteine-tRNA ligase activity"/>
    <property type="evidence" value="ECO:0007669"/>
    <property type="project" value="UniProtKB-UniRule"/>
</dbReference>
<dbReference type="GO" id="GO:0008270">
    <property type="term" value="F:zinc ion binding"/>
    <property type="evidence" value="ECO:0007669"/>
    <property type="project" value="UniProtKB-UniRule"/>
</dbReference>
<dbReference type="GO" id="GO:0006423">
    <property type="term" value="P:cysteinyl-tRNA aminoacylation"/>
    <property type="evidence" value="ECO:0007669"/>
    <property type="project" value="UniProtKB-UniRule"/>
</dbReference>
<dbReference type="CDD" id="cd00672">
    <property type="entry name" value="CysRS_core"/>
    <property type="match status" value="1"/>
</dbReference>
<dbReference type="Gene3D" id="1.20.120.1910">
    <property type="entry name" value="Cysteine-tRNA ligase, C-terminal anti-codon recognition domain"/>
    <property type="match status" value="1"/>
</dbReference>
<dbReference type="Gene3D" id="3.40.50.620">
    <property type="entry name" value="HUPs"/>
    <property type="match status" value="1"/>
</dbReference>
<dbReference type="HAMAP" id="MF_00041">
    <property type="entry name" value="Cys_tRNA_synth"/>
    <property type="match status" value="1"/>
</dbReference>
<dbReference type="InterPro" id="IPR015803">
    <property type="entry name" value="Cys-tRNA-ligase"/>
</dbReference>
<dbReference type="InterPro" id="IPR015273">
    <property type="entry name" value="Cys-tRNA-synt_Ia_DALR"/>
</dbReference>
<dbReference type="InterPro" id="IPR024909">
    <property type="entry name" value="Cys-tRNA/MSH_ligase"/>
</dbReference>
<dbReference type="InterPro" id="IPR014729">
    <property type="entry name" value="Rossmann-like_a/b/a_fold"/>
</dbReference>
<dbReference type="InterPro" id="IPR032678">
    <property type="entry name" value="tRNA-synt_1_cat_dom"/>
</dbReference>
<dbReference type="InterPro" id="IPR009080">
    <property type="entry name" value="tRNAsynth_Ia_anticodon-bd"/>
</dbReference>
<dbReference type="NCBIfam" id="TIGR00435">
    <property type="entry name" value="cysS"/>
    <property type="match status" value="1"/>
</dbReference>
<dbReference type="PANTHER" id="PTHR10890:SF3">
    <property type="entry name" value="CYSTEINE--TRNA LIGASE, CYTOPLASMIC"/>
    <property type="match status" value="1"/>
</dbReference>
<dbReference type="PANTHER" id="PTHR10890">
    <property type="entry name" value="CYSTEINYL-TRNA SYNTHETASE"/>
    <property type="match status" value="1"/>
</dbReference>
<dbReference type="Pfam" id="PF09190">
    <property type="entry name" value="DALR_2"/>
    <property type="match status" value="1"/>
</dbReference>
<dbReference type="Pfam" id="PF01406">
    <property type="entry name" value="tRNA-synt_1e"/>
    <property type="match status" value="1"/>
</dbReference>
<dbReference type="PRINTS" id="PR00983">
    <property type="entry name" value="TRNASYNTHCYS"/>
</dbReference>
<dbReference type="SMART" id="SM00840">
    <property type="entry name" value="DALR_2"/>
    <property type="match status" value="1"/>
</dbReference>
<dbReference type="SUPFAM" id="SSF47323">
    <property type="entry name" value="Anticodon-binding domain of a subclass of class I aminoacyl-tRNA synthetases"/>
    <property type="match status" value="1"/>
</dbReference>
<dbReference type="SUPFAM" id="SSF52374">
    <property type="entry name" value="Nucleotidylyl transferase"/>
    <property type="match status" value="1"/>
</dbReference>
<organism>
    <name type="scientific">Orientia tsutsugamushi (strain Ikeda)</name>
    <name type="common">Rickettsia tsutsugamushi</name>
    <dbReference type="NCBI Taxonomy" id="334380"/>
    <lineage>
        <taxon>Bacteria</taxon>
        <taxon>Pseudomonadati</taxon>
        <taxon>Pseudomonadota</taxon>
        <taxon>Alphaproteobacteria</taxon>
        <taxon>Rickettsiales</taxon>
        <taxon>Rickettsiaceae</taxon>
        <taxon>Rickettsieae</taxon>
        <taxon>Orientia</taxon>
    </lineage>
</organism>
<evidence type="ECO:0000255" key="1">
    <source>
        <dbReference type="HAMAP-Rule" id="MF_00041"/>
    </source>
</evidence>
<sequence length="478" mass="54455">MNLYIYNTLSRKKERFVPLNCKSVKMYVCGPTVYDIPHIGNARSVVVYDLLYRVLSLLYGRQNITYVRNITDIDDKIINRAKELKISIFKLTHETTIKFHEDMSYLGCCNPTIEPKATDNIDVMINIITSLIQTGNAYSTDDGHVYFAVKTFQDYNLLSRRTFDSMILNSRESSEPQKSYFADFVLWKPANADNEDIDAVFDSPWGKGRPGWHIECSAMSYKFLGENFDIHGGGADLIFPHHTNEIAQSRCAFPESRHALYWVHNGFLTVKGEKMSKSLNNFVTVRDLQKQNINGAAVRLMFLSTHYRKPLDFNDKSLNDAKNIINYLYDTIDSVNGTAQQQDNIKAEFKGNAFTVEFISALLDDLNSPKAIACLLNIAKQIRRQNQSEDKLALTQALLYASNLLGILHNYQFIKDSNDVKDNSNVTPHEIDLLIAKRIQAKQDKDWNLADQIRSQLLSNGISLTDKADGTTSWKVIK</sequence>
<comment type="catalytic activity">
    <reaction evidence="1">
        <text>tRNA(Cys) + L-cysteine + ATP = L-cysteinyl-tRNA(Cys) + AMP + diphosphate</text>
        <dbReference type="Rhea" id="RHEA:17773"/>
        <dbReference type="Rhea" id="RHEA-COMP:9661"/>
        <dbReference type="Rhea" id="RHEA-COMP:9679"/>
        <dbReference type="ChEBI" id="CHEBI:30616"/>
        <dbReference type="ChEBI" id="CHEBI:33019"/>
        <dbReference type="ChEBI" id="CHEBI:35235"/>
        <dbReference type="ChEBI" id="CHEBI:78442"/>
        <dbReference type="ChEBI" id="CHEBI:78517"/>
        <dbReference type="ChEBI" id="CHEBI:456215"/>
        <dbReference type="EC" id="6.1.1.16"/>
    </reaction>
</comment>
<comment type="cofactor">
    <cofactor evidence="1">
        <name>Zn(2+)</name>
        <dbReference type="ChEBI" id="CHEBI:29105"/>
    </cofactor>
    <text evidence="1">Binds 1 zinc ion per subunit.</text>
</comment>
<comment type="subunit">
    <text evidence="1">Monomer.</text>
</comment>
<comment type="subcellular location">
    <subcellularLocation>
        <location evidence="1">Cytoplasm</location>
    </subcellularLocation>
</comment>
<comment type="similarity">
    <text evidence="1">Belongs to the class-I aminoacyl-tRNA synthetase family.</text>
</comment>
<reference key="1">
    <citation type="journal article" date="2008" name="DNA Res.">
        <title>The whole-genome sequencing of the obligate intracellular bacterium Orientia tsutsugamushi revealed massive gene amplification during reductive genome evolution.</title>
        <authorList>
            <person name="Nakayama K."/>
            <person name="Yamashita A."/>
            <person name="Kurokawa K."/>
            <person name="Morimoto T."/>
            <person name="Ogawa M."/>
            <person name="Fukuhara M."/>
            <person name="Urakami H."/>
            <person name="Ohnishi M."/>
            <person name="Uchiyama I."/>
            <person name="Ogura Y."/>
            <person name="Ooka T."/>
            <person name="Oshima K."/>
            <person name="Tamura A."/>
            <person name="Hattori M."/>
            <person name="Hayashi T."/>
        </authorList>
    </citation>
    <scope>NUCLEOTIDE SEQUENCE [LARGE SCALE GENOMIC DNA]</scope>
    <source>
        <strain>Ikeda</strain>
    </source>
</reference>
<keyword id="KW-0030">Aminoacyl-tRNA synthetase</keyword>
<keyword id="KW-0067">ATP-binding</keyword>
<keyword id="KW-0963">Cytoplasm</keyword>
<keyword id="KW-0436">Ligase</keyword>
<keyword id="KW-0479">Metal-binding</keyword>
<keyword id="KW-0547">Nucleotide-binding</keyword>
<keyword id="KW-0648">Protein biosynthesis</keyword>
<keyword id="KW-0862">Zinc</keyword>